<evidence type="ECO:0000255" key="1">
    <source>
        <dbReference type="HAMAP-Rule" id="MF_01599"/>
    </source>
</evidence>
<protein>
    <recommendedName>
        <fullName evidence="1">Na(+)/H(+) antiporter NhaB</fullName>
    </recommendedName>
    <alternativeName>
        <fullName evidence="1">Sodium/proton antiporter NhaB</fullName>
    </alternativeName>
</protein>
<sequence length="514" mass="56571">MEISWGRALWRNFLGQSPDWYKLALLIFLIINPLIFLVNPFIAGWLLVAEFIFTLAMALKCYPLLPGGLLAIEAVMIGMTSPSHVRAEVAANLEVLLLLMFMVAGIYFMKQLLLFIFTRLLLSIRSKALLSLSFCLAAAFLSAFLDALTVVAVVISVAVGFYGIYHRVASSRGEDNDILDDSHIDQHFKVILEQFRGFLRSLMMHAGVGTALGGVMTMVGEPQNLIIAKAAGWSFGDFFLRMSPITVPVLVCGLLTCLLVERMGWFGYGEKLPEKVRQVLQQYDDQSRLQRTRQDKVRLIVQALIGIWLVIALALHLAEVGLIGLSVIIMATSLTGVTDEHAIGKAFTESLPFTALLTVFFSIVAVIIDQSLFSPIIHFVLQASEHAQLTLFYLFNGLLSSISDNVFVGTIYINEAKAAMENGTISLNQFELLAAAINTGTNLPSVATPNGQAAFLFLLTSALAPLIRLSYGRMVWMALPYTIVLTCVGLLCVEFTLAPMTEWMTQQGWLATLS</sequence>
<feature type="chain" id="PRO_1000148040" description="Na(+)/H(+) antiporter NhaB">
    <location>
        <begin position="1"/>
        <end position="514"/>
    </location>
</feature>
<feature type="transmembrane region" description="Helical" evidence="1">
    <location>
        <begin position="23"/>
        <end position="43"/>
    </location>
</feature>
<feature type="transmembrane region" description="Helical" evidence="1">
    <location>
        <begin position="52"/>
        <end position="72"/>
    </location>
</feature>
<feature type="transmembrane region" description="Helical" evidence="1">
    <location>
        <begin position="97"/>
        <end position="117"/>
    </location>
</feature>
<feature type="transmembrane region" description="Helical" evidence="1">
    <location>
        <begin position="120"/>
        <end position="140"/>
    </location>
</feature>
<feature type="transmembrane region" description="Helical" evidence="1">
    <location>
        <begin position="144"/>
        <end position="164"/>
    </location>
</feature>
<feature type="transmembrane region" description="Helical" evidence="1">
    <location>
        <begin position="202"/>
        <end position="222"/>
    </location>
</feature>
<feature type="transmembrane region" description="Helical" evidence="1">
    <location>
        <begin position="238"/>
        <end position="258"/>
    </location>
</feature>
<feature type="transmembrane region" description="Helical" evidence="1">
    <location>
        <begin position="303"/>
        <end position="323"/>
    </location>
</feature>
<feature type="transmembrane region" description="Helical" evidence="1">
    <location>
        <begin position="353"/>
        <end position="373"/>
    </location>
</feature>
<feature type="transmembrane region" description="Helical" evidence="1">
    <location>
        <begin position="391"/>
        <end position="411"/>
    </location>
</feature>
<feature type="transmembrane region" description="Helical" evidence="1">
    <location>
        <begin position="447"/>
        <end position="467"/>
    </location>
</feature>
<feature type="transmembrane region" description="Helical" evidence="1">
    <location>
        <begin position="475"/>
        <end position="495"/>
    </location>
</feature>
<comment type="function">
    <text evidence="1">Na(+)/H(+) antiporter that extrudes sodium in exchange for external protons.</text>
</comment>
<comment type="catalytic activity">
    <reaction evidence="1">
        <text>2 Na(+)(in) + 3 H(+)(out) = 2 Na(+)(out) + 3 H(+)(in)</text>
        <dbReference type="Rhea" id="RHEA:29247"/>
        <dbReference type="ChEBI" id="CHEBI:15378"/>
        <dbReference type="ChEBI" id="CHEBI:29101"/>
    </reaction>
    <physiologicalReaction direction="left-to-right" evidence="1">
        <dbReference type="Rhea" id="RHEA:29248"/>
    </physiologicalReaction>
</comment>
<comment type="subcellular location">
    <subcellularLocation>
        <location evidence="1">Cell inner membrane</location>
        <topology evidence="1">Multi-pass membrane protein</topology>
    </subcellularLocation>
</comment>
<comment type="similarity">
    <text evidence="1">Belongs to the NhaB Na(+)/H(+) (TC 2.A.34) antiporter family.</text>
</comment>
<organism>
    <name type="scientific">Escherichia fergusonii (strain ATCC 35469 / DSM 13698 / CCUG 18766 / IAM 14443 / JCM 21226 / LMG 7866 / NBRC 102419 / NCTC 12128 / CDC 0568-73)</name>
    <dbReference type="NCBI Taxonomy" id="585054"/>
    <lineage>
        <taxon>Bacteria</taxon>
        <taxon>Pseudomonadati</taxon>
        <taxon>Pseudomonadota</taxon>
        <taxon>Gammaproteobacteria</taxon>
        <taxon>Enterobacterales</taxon>
        <taxon>Enterobacteriaceae</taxon>
        <taxon>Escherichia</taxon>
    </lineage>
</organism>
<dbReference type="EMBL" id="CU928158">
    <property type="protein sequence ID" value="CAQ89284.1"/>
    <property type="molecule type" value="Genomic_DNA"/>
</dbReference>
<dbReference type="RefSeq" id="WP_000406421.1">
    <property type="nucleotide sequence ID" value="NC_011740.1"/>
</dbReference>
<dbReference type="SMR" id="B7LSJ8"/>
<dbReference type="GeneID" id="75057194"/>
<dbReference type="KEGG" id="efe:EFER_1769"/>
<dbReference type="HOGENOM" id="CLU_041110_0_0_6"/>
<dbReference type="OrthoDB" id="5288732at2"/>
<dbReference type="Proteomes" id="UP000000745">
    <property type="component" value="Chromosome"/>
</dbReference>
<dbReference type="GO" id="GO:0005886">
    <property type="term" value="C:plasma membrane"/>
    <property type="evidence" value="ECO:0007669"/>
    <property type="project" value="UniProtKB-SubCell"/>
</dbReference>
<dbReference type="GO" id="GO:0015385">
    <property type="term" value="F:sodium:proton antiporter activity"/>
    <property type="evidence" value="ECO:0007669"/>
    <property type="project" value="InterPro"/>
</dbReference>
<dbReference type="HAMAP" id="MF_01599">
    <property type="entry name" value="NhaB"/>
    <property type="match status" value="1"/>
</dbReference>
<dbReference type="InterPro" id="IPR004671">
    <property type="entry name" value="Na+/H+_antiporter_NhaB"/>
</dbReference>
<dbReference type="NCBIfam" id="TIGR00774">
    <property type="entry name" value="NhaB"/>
    <property type="match status" value="1"/>
</dbReference>
<dbReference type="NCBIfam" id="NF007093">
    <property type="entry name" value="PRK09547.1"/>
    <property type="match status" value="1"/>
</dbReference>
<dbReference type="PANTHER" id="PTHR43302:SF1">
    <property type="entry name" value="NA(+)_H(+) ANTIPORTER NHAB"/>
    <property type="match status" value="1"/>
</dbReference>
<dbReference type="PANTHER" id="PTHR43302">
    <property type="entry name" value="TRANSPORTER ARSB-RELATED"/>
    <property type="match status" value="1"/>
</dbReference>
<dbReference type="Pfam" id="PF06450">
    <property type="entry name" value="NhaB"/>
    <property type="match status" value="1"/>
</dbReference>
<gene>
    <name evidence="1" type="primary">nhaB</name>
    <name type="ordered locus">EFER_1769</name>
</gene>
<keyword id="KW-0050">Antiport</keyword>
<keyword id="KW-0997">Cell inner membrane</keyword>
<keyword id="KW-1003">Cell membrane</keyword>
<keyword id="KW-0406">Ion transport</keyword>
<keyword id="KW-0472">Membrane</keyword>
<keyword id="KW-0915">Sodium</keyword>
<keyword id="KW-0739">Sodium transport</keyword>
<keyword id="KW-0812">Transmembrane</keyword>
<keyword id="KW-1133">Transmembrane helix</keyword>
<keyword id="KW-0813">Transport</keyword>
<proteinExistence type="inferred from homology"/>
<name>NHAB_ESCF3</name>
<reference key="1">
    <citation type="journal article" date="2009" name="PLoS Genet.">
        <title>Organised genome dynamics in the Escherichia coli species results in highly diverse adaptive paths.</title>
        <authorList>
            <person name="Touchon M."/>
            <person name="Hoede C."/>
            <person name="Tenaillon O."/>
            <person name="Barbe V."/>
            <person name="Baeriswyl S."/>
            <person name="Bidet P."/>
            <person name="Bingen E."/>
            <person name="Bonacorsi S."/>
            <person name="Bouchier C."/>
            <person name="Bouvet O."/>
            <person name="Calteau A."/>
            <person name="Chiapello H."/>
            <person name="Clermont O."/>
            <person name="Cruveiller S."/>
            <person name="Danchin A."/>
            <person name="Diard M."/>
            <person name="Dossat C."/>
            <person name="Karoui M.E."/>
            <person name="Frapy E."/>
            <person name="Garry L."/>
            <person name="Ghigo J.M."/>
            <person name="Gilles A.M."/>
            <person name="Johnson J."/>
            <person name="Le Bouguenec C."/>
            <person name="Lescat M."/>
            <person name="Mangenot S."/>
            <person name="Martinez-Jehanne V."/>
            <person name="Matic I."/>
            <person name="Nassif X."/>
            <person name="Oztas S."/>
            <person name="Petit M.A."/>
            <person name="Pichon C."/>
            <person name="Rouy Z."/>
            <person name="Ruf C.S."/>
            <person name="Schneider D."/>
            <person name="Tourret J."/>
            <person name="Vacherie B."/>
            <person name="Vallenet D."/>
            <person name="Medigue C."/>
            <person name="Rocha E.P.C."/>
            <person name="Denamur E."/>
        </authorList>
    </citation>
    <scope>NUCLEOTIDE SEQUENCE [LARGE SCALE GENOMIC DNA]</scope>
    <source>
        <strain>ATCC 35469 / DSM 13698 / BCRC 15582 / CCUG 18766 / IAM 14443 / JCM 21226 / LMG 7866 / NBRC 102419 / NCTC 12128 / CDC 0568-73</strain>
    </source>
</reference>
<accession>B7LSJ8</accession>